<feature type="chain" id="PRO_0000148774" description="Aspartyl/glutamyl-tRNA(Asn/Gln) amidotransferase subunit B">
    <location>
        <begin position="1"/>
        <end position="498"/>
    </location>
</feature>
<proteinExistence type="inferred from homology"/>
<organism>
    <name type="scientific">Caulobacter vibrioides (strain ATCC 19089 / CIP 103742 / CB 15)</name>
    <name type="common">Caulobacter crescentus</name>
    <dbReference type="NCBI Taxonomy" id="190650"/>
    <lineage>
        <taxon>Bacteria</taxon>
        <taxon>Pseudomonadati</taxon>
        <taxon>Pseudomonadota</taxon>
        <taxon>Alphaproteobacteria</taxon>
        <taxon>Caulobacterales</taxon>
        <taxon>Caulobacteraceae</taxon>
        <taxon>Caulobacter</taxon>
    </lineage>
</organism>
<name>GATB_CAUVC</name>
<comment type="function">
    <text evidence="1">Allows the formation of correctly charged Asn-tRNA(Asn) or Gln-tRNA(Gln) through the transamidation of misacylated Asp-tRNA(Asn) or Glu-tRNA(Gln) in organisms which lack either or both of asparaginyl-tRNA or glutaminyl-tRNA synthetases. The reaction takes place in the presence of glutamine and ATP through an activated phospho-Asp-tRNA(Asn) or phospho-Glu-tRNA(Gln).</text>
</comment>
<comment type="catalytic activity">
    <reaction evidence="1">
        <text>L-glutamyl-tRNA(Gln) + L-glutamine + ATP + H2O = L-glutaminyl-tRNA(Gln) + L-glutamate + ADP + phosphate + H(+)</text>
        <dbReference type="Rhea" id="RHEA:17521"/>
        <dbReference type="Rhea" id="RHEA-COMP:9681"/>
        <dbReference type="Rhea" id="RHEA-COMP:9684"/>
        <dbReference type="ChEBI" id="CHEBI:15377"/>
        <dbReference type="ChEBI" id="CHEBI:15378"/>
        <dbReference type="ChEBI" id="CHEBI:29985"/>
        <dbReference type="ChEBI" id="CHEBI:30616"/>
        <dbReference type="ChEBI" id="CHEBI:43474"/>
        <dbReference type="ChEBI" id="CHEBI:58359"/>
        <dbReference type="ChEBI" id="CHEBI:78520"/>
        <dbReference type="ChEBI" id="CHEBI:78521"/>
        <dbReference type="ChEBI" id="CHEBI:456216"/>
    </reaction>
</comment>
<comment type="catalytic activity">
    <reaction evidence="1">
        <text>L-aspartyl-tRNA(Asn) + L-glutamine + ATP + H2O = L-asparaginyl-tRNA(Asn) + L-glutamate + ADP + phosphate + 2 H(+)</text>
        <dbReference type="Rhea" id="RHEA:14513"/>
        <dbReference type="Rhea" id="RHEA-COMP:9674"/>
        <dbReference type="Rhea" id="RHEA-COMP:9677"/>
        <dbReference type="ChEBI" id="CHEBI:15377"/>
        <dbReference type="ChEBI" id="CHEBI:15378"/>
        <dbReference type="ChEBI" id="CHEBI:29985"/>
        <dbReference type="ChEBI" id="CHEBI:30616"/>
        <dbReference type="ChEBI" id="CHEBI:43474"/>
        <dbReference type="ChEBI" id="CHEBI:58359"/>
        <dbReference type="ChEBI" id="CHEBI:78515"/>
        <dbReference type="ChEBI" id="CHEBI:78516"/>
        <dbReference type="ChEBI" id="CHEBI:456216"/>
    </reaction>
</comment>
<comment type="subunit">
    <text evidence="1">Heterotrimer of A, B and C subunits.</text>
</comment>
<comment type="similarity">
    <text evidence="1">Belongs to the GatB/GatE family. GatB subfamily.</text>
</comment>
<sequence length="498" mass="55020">MNENTKVIKGRTGDWEMVLGLEVHAQVASKSKLFSGAAVGFGAGPNEQVSLVDAAMPGMLPVLNRFCVEQAVKTGLGLRAQINLKSRFDRKNYFYPDLPQGYQISQFDQPIVGEGVVSVERDDGTTFDVRIERLHLEQDAGKSLHDQDPNATYVDLNRAGTALMEIVSKPDMRTSEEAAAYVKKLRTILVYLGTCDGDMEKGNLRADVNVSVCRPGDYEKFRATGDFKHLGTRCEIKNVNSYRYIQQAIEYEARRQIEILEDGGKVDQETRLFDPTKGETRSMRSKEEAHDYRYFPDPDLLPLVLDPAWVKSIEETLPELPDAKKARLQSQYGLSAYDAGVLIIDADRADYFEAAAKGRDAKLVANWVTNELLAKLSAAGTEFTNSPLPHTDIAQLVELIENGTISSKIAKEVFEHMWAGEGRPAEIVEKRGLVQINDTGAIEKAIDDLIAGNPDKAEAVKDKPQALGWFVGQVMKATGGKANPGTVNELLRKKLGVE</sequence>
<protein>
    <recommendedName>
        <fullName evidence="1">Aspartyl/glutamyl-tRNA(Asn/Gln) amidotransferase subunit B</fullName>
        <shortName evidence="1">Asp/Glu-ADT subunit B</shortName>
        <ecNumber evidence="1">6.3.5.-</ecNumber>
    </recommendedName>
</protein>
<keyword id="KW-0067">ATP-binding</keyword>
<keyword id="KW-0436">Ligase</keyword>
<keyword id="KW-0547">Nucleotide-binding</keyword>
<keyword id="KW-0648">Protein biosynthesis</keyword>
<keyword id="KW-1185">Reference proteome</keyword>
<evidence type="ECO:0000255" key="1">
    <source>
        <dbReference type="HAMAP-Rule" id="MF_00121"/>
    </source>
</evidence>
<accession>Q9A5L1</accession>
<gene>
    <name evidence="1" type="primary">gatB</name>
    <name type="ordered locus">CC_2436</name>
</gene>
<dbReference type="EC" id="6.3.5.-" evidence="1"/>
<dbReference type="EMBL" id="AE005673">
    <property type="protein sequence ID" value="AAK24407.1"/>
    <property type="molecule type" value="Genomic_DNA"/>
</dbReference>
<dbReference type="PIR" id="C87551">
    <property type="entry name" value="C87551"/>
</dbReference>
<dbReference type="RefSeq" id="NP_421239.1">
    <property type="nucleotide sequence ID" value="NC_002696.2"/>
</dbReference>
<dbReference type="RefSeq" id="WP_010920294.1">
    <property type="nucleotide sequence ID" value="NC_002696.2"/>
</dbReference>
<dbReference type="SMR" id="Q9A5L1"/>
<dbReference type="STRING" id="190650.CC_2436"/>
<dbReference type="EnsemblBacteria" id="AAK24407">
    <property type="protein sequence ID" value="AAK24407"/>
    <property type="gene ID" value="CC_2436"/>
</dbReference>
<dbReference type="KEGG" id="ccr:CC_2436"/>
<dbReference type="PATRIC" id="fig|190650.5.peg.2453"/>
<dbReference type="eggNOG" id="COG0064">
    <property type="taxonomic scope" value="Bacteria"/>
</dbReference>
<dbReference type="HOGENOM" id="CLU_019240_1_1_5"/>
<dbReference type="BioCyc" id="CAULO:CC2436-MONOMER"/>
<dbReference type="Proteomes" id="UP000001816">
    <property type="component" value="Chromosome"/>
</dbReference>
<dbReference type="GO" id="GO:0050566">
    <property type="term" value="F:asparaginyl-tRNA synthase (glutamine-hydrolyzing) activity"/>
    <property type="evidence" value="ECO:0007669"/>
    <property type="project" value="RHEA"/>
</dbReference>
<dbReference type="GO" id="GO:0005524">
    <property type="term" value="F:ATP binding"/>
    <property type="evidence" value="ECO:0007669"/>
    <property type="project" value="UniProtKB-KW"/>
</dbReference>
<dbReference type="GO" id="GO:0050567">
    <property type="term" value="F:glutaminyl-tRNA synthase (glutamine-hydrolyzing) activity"/>
    <property type="evidence" value="ECO:0007669"/>
    <property type="project" value="UniProtKB-UniRule"/>
</dbReference>
<dbReference type="GO" id="GO:0070681">
    <property type="term" value="P:glutaminyl-tRNAGln biosynthesis via transamidation"/>
    <property type="evidence" value="ECO:0007669"/>
    <property type="project" value="TreeGrafter"/>
</dbReference>
<dbReference type="GO" id="GO:0006412">
    <property type="term" value="P:translation"/>
    <property type="evidence" value="ECO:0007669"/>
    <property type="project" value="UniProtKB-UniRule"/>
</dbReference>
<dbReference type="FunFam" id="1.10.10.410:FF:000001">
    <property type="entry name" value="Aspartyl/glutamyl-tRNA(Asn/Gln) amidotransferase subunit B"/>
    <property type="match status" value="1"/>
</dbReference>
<dbReference type="FunFam" id="1.10.150.380:FF:000001">
    <property type="entry name" value="Aspartyl/glutamyl-tRNA(Asn/Gln) amidotransferase subunit B"/>
    <property type="match status" value="1"/>
</dbReference>
<dbReference type="Gene3D" id="1.10.10.410">
    <property type="match status" value="1"/>
</dbReference>
<dbReference type="Gene3D" id="1.10.150.380">
    <property type="entry name" value="GatB domain, N-terminal subdomain"/>
    <property type="match status" value="1"/>
</dbReference>
<dbReference type="HAMAP" id="MF_00121">
    <property type="entry name" value="GatB"/>
    <property type="match status" value="1"/>
</dbReference>
<dbReference type="InterPro" id="IPR017959">
    <property type="entry name" value="Asn/Gln-tRNA_amidoTrfase_suB/E"/>
</dbReference>
<dbReference type="InterPro" id="IPR006075">
    <property type="entry name" value="Asn/Gln-tRNA_Trfase_suB/E_cat"/>
</dbReference>
<dbReference type="InterPro" id="IPR018027">
    <property type="entry name" value="Asn/Gln_amidotransferase"/>
</dbReference>
<dbReference type="InterPro" id="IPR003789">
    <property type="entry name" value="Asn/Gln_tRNA_amidoTrase-B-like"/>
</dbReference>
<dbReference type="InterPro" id="IPR004413">
    <property type="entry name" value="GatB"/>
</dbReference>
<dbReference type="InterPro" id="IPR042114">
    <property type="entry name" value="GatB_C_1"/>
</dbReference>
<dbReference type="InterPro" id="IPR023168">
    <property type="entry name" value="GatB_Yqey_C_2"/>
</dbReference>
<dbReference type="InterPro" id="IPR017958">
    <property type="entry name" value="Gln-tRNA_amidoTrfase_suB_CS"/>
</dbReference>
<dbReference type="InterPro" id="IPR014746">
    <property type="entry name" value="Gln_synth/guanido_kin_cat_dom"/>
</dbReference>
<dbReference type="NCBIfam" id="TIGR00133">
    <property type="entry name" value="gatB"/>
    <property type="match status" value="1"/>
</dbReference>
<dbReference type="NCBIfam" id="NF004012">
    <property type="entry name" value="PRK05477.1-2"/>
    <property type="match status" value="1"/>
</dbReference>
<dbReference type="NCBIfam" id="NF004014">
    <property type="entry name" value="PRK05477.1-4"/>
    <property type="match status" value="1"/>
</dbReference>
<dbReference type="NCBIfam" id="NF004015">
    <property type="entry name" value="PRK05477.1-5"/>
    <property type="match status" value="1"/>
</dbReference>
<dbReference type="PANTHER" id="PTHR11659">
    <property type="entry name" value="GLUTAMYL-TRNA GLN AMIDOTRANSFERASE SUBUNIT B MITOCHONDRIAL AND PROKARYOTIC PET112-RELATED"/>
    <property type="match status" value="1"/>
</dbReference>
<dbReference type="PANTHER" id="PTHR11659:SF0">
    <property type="entry name" value="GLUTAMYL-TRNA(GLN) AMIDOTRANSFERASE SUBUNIT B, MITOCHONDRIAL"/>
    <property type="match status" value="1"/>
</dbReference>
<dbReference type="Pfam" id="PF02934">
    <property type="entry name" value="GatB_N"/>
    <property type="match status" value="1"/>
</dbReference>
<dbReference type="Pfam" id="PF02637">
    <property type="entry name" value="GatB_Yqey"/>
    <property type="match status" value="1"/>
</dbReference>
<dbReference type="SMART" id="SM00845">
    <property type="entry name" value="GatB_Yqey"/>
    <property type="match status" value="1"/>
</dbReference>
<dbReference type="SUPFAM" id="SSF89095">
    <property type="entry name" value="GatB/YqeY motif"/>
    <property type="match status" value="1"/>
</dbReference>
<dbReference type="SUPFAM" id="SSF55931">
    <property type="entry name" value="Glutamine synthetase/guanido kinase"/>
    <property type="match status" value="1"/>
</dbReference>
<dbReference type="PROSITE" id="PS01234">
    <property type="entry name" value="GATB"/>
    <property type="match status" value="1"/>
</dbReference>
<reference key="1">
    <citation type="journal article" date="2001" name="Proc. Natl. Acad. Sci. U.S.A.">
        <title>Complete genome sequence of Caulobacter crescentus.</title>
        <authorList>
            <person name="Nierman W.C."/>
            <person name="Feldblyum T.V."/>
            <person name="Laub M.T."/>
            <person name="Paulsen I.T."/>
            <person name="Nelson K.E."/>
            <person name="Eisen J.A."/>
            <person name="Heidelberg J.F."/>
            <person name="Alley M.R.K."/>
            <person name="Ohta N."/>
            <person name="Maddock J.R."/>
            <person name="Potocka I."/>
            <person name="Nelson W.C."/>
            <person name="Newton A."/>
            <person name="Stephens C."/>
            <person name="Phadke N.D."/>
            <person name="Ely B."/>
            <person name="DeBoy R.T."/>
            <person name="Dodson R.J."/>
            <person name="Durkin A.S."/>
            <person name="Gwinn M.L."/>
            <person name="Haft D.H."/>
            <person name="Kolonay J.F."/>
            <person name="Smit J."/>
            <person name="Craven M.B."/>
            <person name="Khouri H.M."/>
            <person name="Shetty J."/>
            <person name="Berry K.J."/>
            <person name="Utterback T.R."/>
            <person name="Tran K."/>
            <person name="Wolf A.M."/>
            <person name="Vamathevan J.J."/>
            <person name="Ermolaeva M.D."/>
            <person name="White O."/>
            <person name="Salzberg S.L."/>
            <person name="Venter J.C."/>
            <person name="Shapiro L."/>
            <person name="Fraser C.M."/>
        </authorList>
    </citation>
    <scope>NUCLEOTIDE SEQUENCE [LARGE SCALE GENOMIC DNA]</scope>
    <source>
        <strain>ATCC 19089 / CIP 103742 / CB 15</strain>
    </source>
</reference>